<feature type="peptide" id="PRO_0000044118" description="Sex pheromone cCF10">
    <location>
        <begin position="1"/>
        <end position="7"/>
    </location>
</feature>
<feature type="strand" evidence="1">
    <location>
        <begin position="2"/>
        <end position="4"/>
    </location>
</feature>
<keyword id="KW-0002">3D-structure</keyword>
<keyword id="KW-0903">Direct protein sequencing</keyword>
<keyword id="KW-0588">Pheromone</keyword>
<name>CCF1_ENTFL</name>
<comment type="function">
    <text>cCF10 is involved in the conjugative transfer of the hemolysin plasmid pCF10.</text>
</comment>
<reference key="1">
    <citation type="journal article" date="1988" name="J. Biol. Chem.">
        <title>Structure of cCF10, a peptide sex pheromone which induces conjugative transfer of the Streptococcus faecalis tetracycline resistance plasmid, pCF10.</title>
        <authorList>
            <person name="Mori M."/>
            <person name="Sakagami Y."/>
            <person name="Ishii Y."/>
            <person name="Isogai A."/>
            <person name="Kitada C."/>
            <person name="Fujino M."/>
            <person name="Adsit J.C."/>
            <person name="Dunny G.M."/>
            <person name="Suzuki A."/>
        </authorList>
    </citation>
    <scope>PROTEIN SEQUENCE</scope>
</reference>
<dbReference type="PIR" id="A30812">
    <property type="entry name" value="A30812"/>
</dbReference>
<dbReference type="PDB" id="2AW6">
    <property type="method" value="X-ray"/>
    <property type="resolution" value="3.00 A"/>
    <property type="chains" value="E/F=1-7"/>
</dbReference>
<dbReference type="PDB" id="2AXZ">
    <property type="method" value="X-ray"/>
    <property type="resolution" value="3.00 A"/>
    <property type="chains" value="E/F/H=1-7"/>
</dbReference>
<dbReference type="PDB" id="4FAJ">
    <property type="method" value="X-ray"/>
    <property type="resolution" value="1.90 A"/>
    <property type="chains" value="B=1-7"/>
</dbReference>
<dbReference type="PDBsum" id="2AW6"/>
<dbReference type="PDBsum" id="2AXZ"/>
<dbReference type="PDBsum" id="4FAJ"/>
<dbReference type="SMR" id="P20104"/>
<dbReference type="IntAct" id="P20104">
    <property type="interactions" value="1"/>
</dbReference>
<dbReference type="GO" id="GO:0005186">
    <property type="term" value="F:pheromone activity"/>
    <property type="evidence" value="ECO:0007669"/>
    <property type="project" value="UniProtKB-KW"/>
</dbReference>
<organism>
    <name type="scientific">Enterococcus faecalis</name>
    <name type="common">Streptococcus faecalis</name>
    <dbReference type="NCBI Taxonomy" id="1351"/>
    <lineage>
        <taxon>Bacteria</taxon>
        <taxon>Bacillati</taxon>
        <taxon>Bacillota</taxon>
        <taxon>Bacilli</taxon>
        <taxon>Lactobacillales</taxon>
        <taxon>Enterococcaceae</taxon>
        <taxon>Enterococcus</taxon>
    </lineage>
</organism>
<evidence type="ECO:0007829" key="1">
    <source>
        <dbReference type="PDB" id="4FAJ"/>
    </source>
</evidence>
<protein>
    <recommendedName>
        <fullName>Sex pheromone cCF10</fullName>
    </recommendedName>
</protein>
<sequence length="7" mass="790">LVTLVFV</sequence>
<accession>P20104</accession>
<proteinExistence type="evidence at protein level"/>